<accession>Q8D7G6</accession>
<comment type="function">
    <text evidence="1">The glycine cleavage system catalyzes the degradation of glycine. The H protein shuttles the methylamine group of glycine from the P protein to the T protein.</text>
</comment>
<comment type="cofactor">
    <cofactor evidence="1">
        <name>(R)-lipoate</name>
        <dbReference type="ChEBI" id="CHEBI:83088"/>
    </cofactor>
    <text evidence="1">Binds 1 lipoyl cofactor covalently.</text>
</comment>
<comment type="subunit">
    <text evidence="1">The glycine cleavage system is composed of four proteins: P, T, L and H.</text>
</comment>
<comment type="similarity">
    <text evidence="1">Belongs to the GcvH family.</text>
</comment>
<organism>
    <name type="scientific">Vibrio vulnificus (strain CMCP6)</name>
    <dbReference type="NCBI Taxonomy" id="216895"/>
    <lineage>
        <taxon>Bacteria</taxon>
        <taxon>Pseudomonadati</taxon>
        <taxon>Pseudomonadota</taxon>
        <taxon>Gammaproteobacteria</taxon>
        <taxon>Vibrionales</taxon>
        <taxon>Vibrionaceae</taxon>
        <taxon>Vibrio</taxon>
    </lineage>
</organism>
<proteinExistence type="inferred from homology"/>
<gene>
    <name evidence="1" type="primary">gcvH</name>
    <name type="ordered locus">VV2_0187</name>
</gene>
<feature type="chain" id="PRO_0000166265" description="Glycine cleavage system H protein">
    <location>
        <begin position="1"/>
        <end position="126"/>
    </location>
</feature>
<feature type="domain" description="Lipoyl-binding" evidence="2">
    <location>
        <begin position="21"/>
        <end position="103"/>
    </location>
</feature>
<feature type="modified residue" description="N6-lipoyllysine" evidence="1">
    <location>
        <position position="62"/>
    </location>
</feature>
<dbReference type="EMBL" id="AE016796">
    <property type="protein sequence ID" value="AAO07160.1"/>
    <property type="molecule type" value="Genomic_DNA"/>
</dbReference>
<dbReference type="RefSeq" id="WP_011081167.1">
    <property type="nucleotide sequence ID" value="NC_004460.2"/>
</dbReference>
<dbReference type="SMR" id="Q8D7G6"/>
<dbReference type="GeneID" id="93898120"/>
<dbReference type="KEGG" id="vvu:VV2_0187"/>
<dbReference type="HOGENOM" id="CLU_097408_2_0_6"/>
<dbReference type="Proteomes" id="UP000002275">
    <property type="component" value="Chromosome 2"/>
</dbReference>
<dbReference type="GO" id="GO:0005829">
    <property type="term" value="C:cytosol"/>
    <property type="evidence" value="ECO:0007669"/>
    <property type="project" value="TreeGrafter"/>
</dbReference>
<dbReference type="GO" id="GO:0005960">
    <property type="term" value="C:glycine cleavage complex"/>
    <property type="evidence" value="ECO:0007669"/>
    <property type="project" value="InterPro"/>
</dbReference>
<dbReference type="GO" id="GO:0019464">
    <property type="term" value="P:glycine decarboxylation via glycine cleavage system"/>
    <property type="evidence" value="ECO:0007669"/>
    <property type="project" value="UniProtKB-UniRule"/>
</dbReference>
<dbReference type="CDD" id="cd06848">
    <property type="entry name" value="GCS_H"/>
    <property type="match status" value="1"/>
</dbReference>
<dbReference type="FunFam" id="2.40.50.100:FF:000011">
    <property type="entry name" value="Glycine cleavage system H protein"/>
    <property type="match status" value="1"/>
</dbReference>
<dbReference type="Gene3D" id="2.40.50.100">
    <property type="match status" value="1"/>
</dbReference>
<dbReference type="HAMAP" id="MF_00272">
    <property type="entry name" value="GcvH"/>
    <property type="match status" value="1"/>
</dbReference>
<dbReference type="InterPro" id="IPR000089">
    <property type="entry name" value="Biotin_lipoyl"/>
</dbReference>
<dbReference type="InterPro" id="IPR002930">
    <property type="entry name" value="GCV_H"/>
</dbReference>
<dbReference type="InterPro" id="IPR033753">
    <property type="entry name" value="GCV_H/Fam206"/>
</dbReference>
<dbReference type="InterPro" id="IPR017453">
    <property type="entry name" value="GCV_H_sub"/>
</dbReference>
<dbReference type="InterPro" id="IPR011053">
    <property type="entry name" value="Single_hybrid_motif"/>
</dbReference>
<dbReference type="NCBIfam" id="TIGR00527">
    <property type="entry name" value="gcvH"/>
    <property type="match status" value="1"/>
</dbReference>
<dbReference type="NCBIfam" id="NF002270">
    <property type="entry name" value="PRK01202.1"/>
    <property type="match status" value="1"/>
</dbReference>
<dbReference type="PANTHER" id="PTHR11715">
    <property type="entry name" value="GLYCINE CLEAVAGE SYSTEM H PROTEIN"/>
    <property type="match status" value="1"/>
</dbReference>
<dbReference type="PANTHER" id="PTHR11715:SF3">
    <property type="entry name" value="GLYCINE CLEAVAGE SYSTEM H PROTEIN-RELATED"/>
    <property type="match status" value="1"/>
</dbReference>
<dbReference type="Pfam" id="PF01597">
    <property type="entry name" value="GCV_H"/>
    <property type="match status" value="1"/>
</dbReference>
<dbReference type="SUPFAM" id="SSF51230">
    <property type="entry name" value="Single hybrid motif"/>
    <property type="match status" value="1"/>
</dbReference>
<dbReference type="PROSITE" id="PS50968">
    <property type="entry name" value="BIOTINYL_LIPOYL"/>
    <property type="match status" value="1"/>
</dbReference>
<evidence type="ECO:0000255" key="1">
    <source>
        <dbReference type="HAMAP-Rule" id="MF_00272"/>
    </source>
</evidence>
<evidence type="ECO:0000255" key="2">
    <source>
        <dbReference type="PROSITE-ProRule" id="PRU01066"/>
    </source>
</evidence>
<name>GCSH_VIBVU</name>
<keyword id="KW-0450">Lipoyl</keyword>
<reference key="1">
    <citation type="submission" date="2002-12" db="EMBL/GenBank/DDBJ databases">
        <title>Complete genome sequence of Vibrio vulnificus CMCP6.</title>
        <authorList>
            <person name="Rhee J.H."/>
            <person name="Kim S.Y."/>
            <person name="Chung S.S."/>
            <person name="Kim J.J."/>
            <person name="Moon Y.H."/>
            <person name="Jeong H."/>
            <person name="Choy H.E."/>
        </authorList>
    </citation>
    <scope>NUCLEOTIDE SEQUENCE [LARGE SCALE GENOMIC DNA]</scope>
    <source>
        <strain>CMCP6</strain>
    </source>
</reference>
<sequence>MDKTLKFTESHEWVRDNGDGTVTIGISEHAQEMLGDVVFVELPELEAEIEAGESFSLVESVKAASDIYAPVTGEVVEVNEELSDSPELINEEPYEGGWIVKVKLSDPSELDNLKDAEEYLNSIEED</sequence>
<protein>
    <recommendedName>
        <fullName evidence="1">Glycine cleavage system H protein</fullName>
    </recommendedName>
</protein>